<feature type="chain" id="PRO_0000459223" description="Potassium transporter TRK1">
    <location>
        <begin position="1"/>
        <end position="1059"/>
    </location>
</feature>
<feature type="topological domain" description="Cytoplasmic" evidence="10">
    <location>
        <begin position="1"/>
        <end position="46"/>
    </location>
</feature>
<feature type="transmembrane region" description="Helical; Name=1" evidence="10">
    <location>
        <begin position="47"/>
        <end position="67"/>
    </location>
</feature>
<feature type="topological domain" description="Extracellular" evidence="10">
    <location>
        <begin position="68"/>
        <end position="73"/>
    </location>
</feature>
<feature type="intramembrane region" evidence="10">
    <location>
        <begin position="74"/>
        <end position="90"/>
    </location>
</feature>
<feature type="topological domain" description="Extracellular" evidence="10">
    <location>
        <begin position="91"/>
        <end position="99"/>
    </location>
</feature>
<feature type="transmembrane region" description="Helical; Name=2" evidence="10">
    <location>
        <begin position="100"/>
        <end position="122"/>
    </location>
</feature>
<feature type="topological domain" description="Cytoplasmic" evidence="10">
    <location>
        <begin position="123"/>
        <end position="625"/>
    </location>
</feature>
<feature type="transmembrane region" description="Helical; Name=3" evidence="10">
    <location>
        <begin position="626"/>
        <end position="649"/>
    </location>
</feature>
<feature type="topological domain" description="Extracellular" evidence="10">
    <location>
        <begin position="650"/>
        <end position="668"/>
    </location>
</feature>
<feature type="intramembrane region" evidence="10">
    <location>
        <begin position="669"/>
        <end position="685"/>
    </location>
</feature>
<feature type="topological domain" description="Extracellular" evidence="10">
    <location>
        <begin position="686"/>
        <end position="696"/>
    </location>
</feature>
<feature type="transmembrane region" description="Helical; Name=4" evidence="10">
    <location>
        <begin position="697"/>
        <end position="713"/>
    </location>
</feature>
<feature type="topological domain" description="Cytoplasmic" evidence="10">
    <location>
        <begin position="714"/>
        <end position="757"/>
    </location>
</feature>
<feature type="transmembrane region" description="Helical; Name=5" evidence="10">
    <location>
        <begin position="758"/>
        <end position="781"/>
    </location>
</feature>
<feature type="topological domain" description="Extracellular" evidence="10">
    <location>
        <begin position="782"/>
        <end position="796"/>
    </location>
</feature>
<feature type="intramembrane region" evidence="10">
    <location>
        <begin position="797"/>
        <end position="813"/>
    </location>
</feature>
<feature type="topological domain" description="Extracellular" evidence="10">
    <location>
        <begin position="814"/>
        <end position="820"/>
    </location>
</feature>
<feature type="transmembrane region" description="Helical; Name=6" evidence="10">
    <location>
        <begin position="821"/>
        <end position="844"/>
    </location>
</feature>
<feature type="topological domain" description="Cytoplasmic" evidence="10">
    <location>
        <begin position="845"/>
        <end position="877"/>
    </location>
</feature>
<feature type="transmembrane region" description="Helical; Name=7" evidence="10">
    <location>
        <begin position="878"/>
        <end position="899"/>
    </location>
</feature>
<feature type="topological domain" description="Extracellular" evidence="10">
    <location>
        <begin position="900"/>
        <end position="912"/>
    </location>
</feature>
<feature type="intramembrane region" evidence="10">
    <location>
        <begin position="913"/>
        <end position="931"/>
    </location>
</feature>
<feature type="topological domain" description="Extracellular" evidence="10">
    <location>
        <begin position="932"/>
        <end position="945"/>
    </location>
</feature>
<feature type="transmembrane region" description="Helical; Name=8" evidence="10">
    <location>
        <begin position="946"/>
        <end position="968"/>
    </location>
</feature>
<feature type="topological domain" description="Cytoplasmic" evidence="10">
    <location>
        <begin position="969"/>
        <end position="1059"/>
    </location>
</feature>
<feature type="region of interest" description="Disordered" evidence="2">
    <location>
        <begin position="180"/>
        <end position="276"/>
    </location>
</feature>
<feature type="region of interest" description="Disordered" evidence="2">
    <location>
        <begin position="304"/>
        <end position="350"/>
    </location>
</feature>
<feature type="region of interest" description="Disordered" evidence="2">
    <location>
        <begin position="404"/>
        <end position="574"/>
    </location>
</feature>
<feature type="compositionally biased region" description="Low complexity" evidence="2">
    <location>
        <begin position="186"/>
        <end position="203"/>
    </location>
</feature>
<feature type="compositionally biased region" description="Basic and acidic residues" evidence="2">
    <location>
        <begin position="236"/>
        <end position="245"/>
    </location>
</feature>
<feature type="compositionally biased region" description="Polar residues" evidence="2">
    <location>
        <begin position="335"/>
        <end position="344"/>
    </location>
</feature>
<feature type="compositionally biased region" description="Low complexity" evidence="2">
    <location>
        <begin position="412"/>
        <end position="423"/>
    </location>
</feature>
<feature type="compositionally biased region" description="Acidic residues" evidence="2">
    <location>
        <begin position="428"/>
        <end position="449"/>
    </location>
</feature>
<feature type="compositionally biased region" description="Acidic residues" evidence="2">
    <location>
        <begin position="469"/>
        <end position="490"/>
    </location>
</feature>
<feature type="compositionally biased region" description="Polar residues" evidence="2">
    <location>
        <begin position="524"/>
        <end position="536"/>
    </location>
</feature>
<feature type="compositionally biased region" description="Basic residues" evidence="2">
    <location>
        <begin position="540"/>
        <end position="552"/>
    </location>
</feature>
<feature type="compositionally biased region" description="Polar residues" evidence="2">
    <location>
        <begin position="556"/>
        <end position="566"/>
    </location>
</feature>
<accession>Q9P8G2</accession>
<proteinExistence type="evidence at protein level"/>
<sequence>MLYRVSGFYKRHTRNFTNIDYGYYIRNFIHHIASKIYPYAKVVLPNFRAAHYFYILTLVILGSILVYPVKTCAYIDVLFFTAGASTQAGLNTVNVNDLSLYQQIVLYLLATLATPIFIHGSLLFVRLYYFERHFDNIKERSLMDYRMRKSATLARLGSAPTMSSTRLNTFNNQVLGFQEREAEKGSSSSPQSSSSQTSQPVSTAYNDQGGNDIEHHSEPSDSDDDESGNGPVTFQEKIHFEEPQRPRSQRRHSRTDSGIKFSALPHPRRRKSIDPEDMYRSINMLQEHKKNQEAKSKGIQFLNIGSPVRRKSRSSNIEAFPEEDTNPSRDDEITPATNSVGTGNNDEDEDDILIIKPPIEIENSDGANPIFTKKKKLASQIQFKETPGKAKKWITTKKRKHYNPWTSKLKKTLSNSSKKGSLSVVPTDTEDDSEDEEYASIDSETSDISDNEHAADNAEGSDVDSVGSYEEDEDEDEHNSDDDDDDDDGEGERRLGNGASLTKAQSHLVLPSKDETGGKKYTKRSNTLDTPQQNTSDGRKIRKKAPKRKTPRTQRNASFNQHSNVSIGDGSIENVDTNDSYQRLSRTMSGNYLSWTPTVGRNSTFIKLTDEQKEELGGIEYRAVKLLIKIIVVYYVGFNIIPGVMLSIWIYCMPHYKNLMISSSISPAWWAFFTSQSSFNDLGLTLTSNSMMSFNQNAFVQILCSFLIVIGNTGFPILLRFIIWVMFKTARPLSLYKESLGFLLDHPRRCFTLLFPSVPTWWLFFILVVLNGFDLVIFCILDLHDDTFKGVDMGYRVLNGLFQAFCTRTVGFSVMDLSQLHAATQVSYLIMMYISVLPIAISVRRTNVYEEQSLGVYAKENAEGVDESAPSNYVGSHLRNQLSYDLWYICLGLFIICIAEGKRLKEQDLRFSIFAVLFEIVSAYGTVGMSMGYPGVDCSLSGEFNVISKLVIIAMMIRGRHRGLPYTIDRAIMLPNAAMKRHDRLQEEHAINRHNTMERTTTLGRVATFGNGPIDGGNNLLTRAITNIEHRLRNRRDGRSESSTVSEDPRYVVRTVSEV</sequence>
<organism>
    <name type="scientific">Candida albicans</name>
    <name type="common">Yeast</name>
    <dbReference type="NCBI Taxonomy" id="5476"/>
    <lineage>
        <taxon>Eukaryota</taxon>
        <taxon>Fungi</taxon>
        <taxon>Dikarya</taxon>
        <taxon>Ascomycota</taxon>
        <taxon>Saccharomycotina</taxon>
        <taxon>Pichiomycetes</taxon>
        <taxon>Debaryomycetaceae</taxon>
        <taxon>Candida/Lodderomyces clade</taxon>
        <taxon>Candida</taxon>
    </lineage>
</organism>
<reference key="1">
    <citation type="submission" date="2000-05" db="EMBL/GenBank/DDBJ databases">
        <title>Cloning and characterization of a TRK homolog from Candida albicans (TRK1) by complementation in Saccharomyces.</title>
        <authorList>
            <person name="Miranda M."/>
            <person name="Bashi E."/>
            <person name="Slayman C.L."/>
        </authorList>
    </citation>
    <scope>NUCLEOTIDE SEQUENCE [GENOMIC DNA]</scope>
</reference>
<reference key="2">
    <citation type="journal article" date="2004" name="J. Biol. Chem.">
        <title>The TRK1 potassium transporter is the critical effector for killing of Candida albicans by the cationic protein, Histatin 5.</title>
        <authorList>
            <person name="Baev D."/>
            <person name="Rivetta A."/>
            <person name="Vylkova S."/>
            <person name="Sun J.N."/>
            <person name="Zeng G.F."/>
            <person name="Slayman C.L."/>
            <person name="Edgerton M."/>
        </authorList>
    </citation>
    <scope>NUCLEOTIDE SEQUENCE [GENOMIC DNA]</scope>
    <scope>FUNCTION</scope>
    <scope>TRANSPORTER ACTIVITY</scope>
    <scope>DISRUPTION PHENOTYPE</scope>
    <scope>ACTIVITY REGULATION</scope>
</reference>
<reference key="3">
    <citation type="journal article" date="2006" name="Antimicrob. Agents Chemother.">
        <title>Distinct antifungal mechanisms: beta-defensins require Candida albicans Ssa1 protein, while Trk1p mediates activity of cysteine-free cationic peptides.</title>
        <authorList>
            <person name="Vylkova S."/>
            <person name="Li X.S."/>
            <person name="Berner J.C."/>
            <person name="Edgerton M."/>
        </authorList>
    </citation>
    <scope>FUNCTION</scope>
    <scope>DISRUPTION PHENOTYPE</scope>
</reference>
<reference key="4">
    <citation type="journal article" date="2009" name="FEMS Yeast Res.">
        <title>Conservation and dispersion of sequence and function in fungal TRK potassium transporters: focus on Candida albicans.</title>
        <authorList>
            <person name="Miranda M."/>
            <person name="Bashi E."/>
            <person name="Vylkova S."/>
            <person name="Edgerton M."/>
            <person name="Slayman C."/>
            <person name="Rivetta A."/>
        </authorList>
    </citation>
    <scope>FUNCTION</scope>
    <scope>TRANSPORTER ACTIVITY</scope>
    <scope>SUBCELLULAR LOCATION</scope>
    <scope>TOPOLOGY</scope>
</reference>
<reference key="5">
    <citation type="journal article" date="2012" name="Cell">
        <title>A recently evolved transcriptional network controls biofilm development in Candida albicans.</title>
        <authorList>
            <person name="Nobile C.J."/>
            <person name="Fox E.P."/>
            <person name="Nett J.E."/>
            <person name="Sorrells T.R."/>
            <person name="Mitrovich Q.M."/>
            <person name="Hernday A.D."/>
            <person name="Tuch B.B."/>
            <person name="Andes D.R."/>
            <person name="Johnson A.D."/>
        </authorList>
    </citation>
    <scope>INDUCTION</scope>
</reference>
<reference key="6">
    <citation type="journal article" date="2021" name="Biochim. Biophys. Acta">
        <title>Regulation and activity of CaTrk1, CaAcu1 and CaHak1, the three plasma membrane potassium transporters in Candida albicans.</title>
        <authorList>
            <person name="Ruiz-Castilla F.J."/>
            <person name="Bieber J."/>
            <person name="Caro G."/>
            <person name="Michan C."/>
            <person name="Sychrova H."/>
            <person name="Ramos J."/>
        </authorList>
    </citation>
    <scope>FUNCTION</scope>
    <scope>INDUCTION</scope>
    <scope>TRANSPORTER ACTIVITY</scope>
</reference>
<name>TRK1_CANAX</name>
<dbReference type="EMBL" id="AF267125">
    <property type="protein sequence ID" value="AAF72203.1"/>
    <property type="molecule type" value="Genomic_DNA"/>
</dbReference>
<dbReference type="SMR" id="Q9P8G2"/>
<dbReference type="VEuPathDB" id="FungiDB:CAWG_02090"/>
<dbReference type="VEuPathDB" id="FungiDB:CR_07960C_A"/>
<dbReference type="GO" id="GO:0034707">
    <property type="term" value="C:chloride channel complex"/>
    <property type="evidence" value="ECO:0007669"/>
    <property type="project" value="UniProtKB-KW"/>
</dbReference>
<dbReference type="GO" id="GO:0005886">
    <property type="term" value="C:plasma membrane"/>
    <property type="evidence" value="ECO:0007669"/>
    <property type="project" value="UniProtKB-SubCell"/>
</dbReference>
<dbReference type="GO" id="GO:0005254">
    <property type="term" value="F:chloride channel activity"/>
    <property type="evidence" value="ECO:0007669"/>
    <property type="project" value="UniProtKB-KW"/>
</dbReference>
<dbReference type="GO" id="GO:0140107">
    <property type="term" value="F:high-affinity potassium ion transmembrane transporter activity"/>
    <property type="evidence" value="ECO:0007669"/>
    <property type="project" value="TreeGrafter"/>
</dbReference>
<dbReference type="GO" id="GO:0030007">
    <property type="term" value="P:intracellular potassium ion homeostasis"/>
    <property type="evidence" value="ECO:0007669"/>
    <property type="project" value="InterPro"/>
</dbReference>
<dbReference type="GO" id="GO:1990573">
    <property type="term" value="P:potassium ion import across plasma membrane"/>
    <property type="evidence" value="ECO:0007669"/>
    <property type="project" value="TreeGrafter"/>
</dbReference>
<dbReference type="InterPro" id="IPR003445">
    <property type="entry name" value="Cat_transpt"/>
</dbReference>
<dbReference type="InterPro" id="IPR004773">
    <property type="entry name" value="K/Na_transp_Trk1/HKT1"/>
</dbReference>
<dbReference type="InterPro" id="IPR015958">
    <property type="entry name" value="Trk1_fungi"/>
</dbReference>
<dbReference type="InterPro" id="IPR051143">
    <property type="entry name" value="TrkH_K-transport"/>
</dbReference>
<dbReference type="NCBIfam" id="TIGR00934">
    <property type="entry name" value="2a38euk"/>
    <property type="match status" value="1"/>
</dbReference>
<dbReference type="PANTHER" id="PTHR31064:SF30">
    <property type="entry name" value="HIGH-AFFINITY POTASSIUM TRANSPORT PROTEIN-RELATED"/>
    <property type="match status" value="1"/>
</dbReference>
<dbReference type="PANTHER" id="PTHR31064">
    <property type="entry name" value="POTASSIUM TRANSPORT PROTEIN DDB_G0292412-RELATED"/>
    <property type="match status" value="1"/>
</dbReference>
<dbReference type="Pfam" id="PF02386">
    <property type="entry name" value="TrkH"/>
    <property type="match status" value="1"/>
</dbReference>
<dbReference type="PIRSF" id="PIRSF002450">
    <property type="entry name" value="K+_transpter_TRK"/>
    <property type="match status" value="1"/>
</dbReference>
<protein>
    <recommendedName>
        <fullName evidence="8">Potassium transporter TRK1</fullName>
    </recommendedName>
</protein>
<keyword id="KW-1003">Cell membrane</keyword>
<keyword id="KW-0868">Chloride</keyword>
<keyword id="KW-0869">Chloride channel</keyword>
<keyword id="KW-0407">Ion channel</keyword>
<keyword id="KW-0406">Ion transport</keyword>
<keyword id="KW-0472">Membrane</keyword>
<keyword id="KW-0630">Potassium</keyword>
<keyword id="KW-0633">Potassium transport</keyword>
<keyword id="KW-0812">Transmembrane</keyword>
<keyword id="KW-1133">Transmembrane helix</keyword>
<keyword id="KW-0813">Transport</keyword>
<comment type="function">
    <text evidence="3 5 7">Potassium transporter that mediates K(+) influx, as well as Cl(-) efflux as a secondary function (PubMed:15485849, PubMed:19175416, PubMed:33069635). TRK1 is the major K(+) uptake transporter that regulates membrane potential and intracellular pH (PubMed:33069635). The TRK1-mediated Cl(-) efflux should serve as a Cl(-) detoxification route and may play a role in sustaining C.albicans on mammalian epithelial surfaces, or in physiological saline solutions such as saliva (PubMed:19175416).</text>
</comment>
<comment type="function">
    <text evidence="3 4">Mediates candidacidal activities of cysteine-free peptides, but not of defensins (PubMed:16377704). The hallmark of salivary gland-secreted histatin-5 (Hst 5) killing of C.albicans is the rapid efflux of cellular ATP and other small nucleotides and ions from the cell as well as concurrent intracellular uptake of propidium iodide (PI) (PubMed:16377704). TRK1 is the channel for Hst 5-induced killing and histatin-5 may directly or indirectly alter TRK1 function, allowing the efflux of larger anions, including ATP, and the influx of small cationic dyes, such as PI (PubMed:15485849, PubMed:16377704).</text>
</comment>
<comment type="catalytic activity">
    <reaction evidence="3 5 7">
        <text>K(+)(in) = K(+)(out)</text>
        <dbReference type="Rhea" id="RHEA:29463"/>
        <dbReference type="ChEBI" id="CHEBI:29103"/>
    </reaction>
    <physiologicalReaction direction="right-to-left" evidence="3 5 7">
        <dbReference type="Rhea" id="RHEA:29465"/>
    </physiologicalReaction>
</comment>
<comment type="catalytic activity">
    <reaction evidence="3 5">
        <text>chloride(in) = chloride(out)</text>
        <dbReference type="Rhea" id="RHEA:29823"/>
        <dbReference type="ChEBI" id="CHEBI:17996"/>
    </reaction>
    <physiologicalReaction direction="left-to-right" evidence="3 5">
        <dbReference type="Rhea" id="RHEA:29824"/>
    </physiologicalReaction>
</comment>
<comment type="activity regulation">
    <text evidence="3">TRK1-mediated chloride conductance is blocked by 4,4'-diisothiocyanatostilbene-2,2'-disulfonic acid.</text>
</comment>
<comment type="subcellular location">
    <subcellularLocation>
        <location evidence="10">Cell membrane</location>
        <topology evidence="1">Multi-pass membrane protein</topology>
    </subcellularLocation>
</comment>
<comment type="induction">
    <text evidence="6 7">Induced during biofilm formation (PubMed:22265407). Expression diminishes when pH was altered, either to acidic or to basic conditions (PubMed:33069635).</text>
</comment>
<comment type="disruption phenotype">
    <text evidence="3 4">Abolishes salivary gland-secreted histatin 5 (Hst 5) mediated killing.</text>
</comment>
<comment type="similarity">
    <text evidence="9">Belongs to the TrkH potassium transport family.</text>
</comment>
<gene>
    <name evidence="8" type="primary">TRK1</name>
</gene>
<evidence type="ECO:0000255" key="1"/>
<evidence type="ECO:0000256" key="2">
    <source>
        <dbReference type="SAM" id="MobiDB-lite"/>
    </source>
</evidence>
<evidence type="ECO:0000269" key="3">
    <source>
    </source>
</evidence>
<evidence type="ECO:0000269" key="4">
    <source>
    </source>
</evidence>
<evidence type="ECO:0000269" key="5">
    <source>
    </source>
</evidence>
<evidence type="ECO:0000269" key="6">
    <source>
    </source>
</evidence>
<evidence type="ECO:0000269" key="7">
    <source>
    </source>
</evidence>
<evidence type="ECO:0000303" key="8">
    <source>
    </source>
</evidence>
<evidence type="ECO:0000305" key="9"/>
<evidence type="ECO:0000305" key="10">
    <source>
    </source>
</evidence>